<gene>
    <name type="ORF">LmjF18.0680</name>
    <name type="ORF">LmjF_18_0680</name>
</gene>
<name>CISY_LEIMA</name>
<sequence>MRAVRCSLIRGVAGLRMASSALDEMKEQMLRRWKEDQKKIDDLRKKHGHEKLCDATIDAVYGGMRGITGLVYEPSLLDPAEGIRFRGLTILECQEMLPKAPGGKEPLPEAMFWLLMTGEVPTEEQVRGLNAELHRRADPEAIAAAQKAIAALPRNAHPMTAFSVGVLALQSYSKFAAAYAAGKSNKKTYWEYALEDSLDMLARTPTVAAMIYNRETKGQVELAAPSNSDLDWAANFAKMMGYQDEEFWECMRLYLSVHADHEGGNVSAHTTTLVASALSDPYLAFSAGLNGLAGPLHGLANQEVLNYLLSMQERVKADGVNMHDEAALEKALSNYTWELLNSGQVVPGYGHAVLRKVDPRYTCQRNFCLRHKFDDDLFKLVNTIYSIMPGILKEHGKTKNPYPNVDAHSGVLLQHYGLTEQNYYTVLFGLSRQMGVLAGVVWDRLQGRPLERPKSITTEMLAKKYLCNSL</sequence>
<dbReference type="EC" id="2.3.3.16"/>
<dbReference type="EMBL" id="FR796414">
    <property type="protein sequence ID" value="CAJ03695.1"/>
    <property type="molecule type" value="Genomic_DNA"/>
</dbReference>
<dbReference type="RefSeq" id="XP_001682475.1">
    <property type="nucleotide sequence ID" value="XM_001682423.1"/>
</dbReference>
<dbReference type="SMR" id="Q4QDX3"/>
<dbReference type="FunCoup" id="Q4QDX3">
    <property type="interactions" value="293"/>
</dbReference>
<dbReference type="STRING" id="5664.Q4QDX3"/>
<dbReference type="EnsemblProtists" id="CAJ03695">
    <property type="protein sequence ID" value="CAJ03695"/>
    <property type="gene ID" value="LMJF_18_0680"/>
</dbReference>
<dbReference type="GeneID" id="5650994"/>
<dbReference type="KEGG" id="lma:LMJF_18_0680"/>
<dbReference type="VEuPathDB" id="TriTrypDB:LmjF.18.0680"/>
<dbReference type="VEuPathDB" id="TriTrypDB:LMJFC_180013500"/>
<dbReference type="VEuPathDB" id="TriTrypDB:LMJLV39_180012400"/>
<dbReference type="VEuPathDB" id="TriTrypDB:LMJSD75_180012300"/>
<dbReference type="eggNOG" id="KOG2617">
    <property type="taxonomic scope" value="Eukaryota"/>
</dbReference>
<dbReference type="InParanoid" id="Q4QDX3"/>
<dbReference type="OMA" id="VLEWLFK"/>
<dbReference type="UniPathway" id="UPA00223">
    <property type="reaction ID" value="UER00717"/>
</dbReference>
<dbReference type="Proteomes" id="UP000000542">
    <property type="component" value="Chromosome 18"/>
</dbReference>
<dbReference type="GO" id="GO:0020023">
    <property type="term" value="C:kinetoplast"/>
    <property type="evidence" value="ECO:0000266"/>
    <property type="project" value="GeneDB"/>
</dbReference>
<dbReference type="GO" id="GO:0005759">
    <property type="term" value="C:mitochondrial matrix"/>
    <property type="evidence" value="ECO:0000318"/>
    <property type="project" value="GO_Central"/>
</dbReference>
<dbReference type="GO" id="GO:0005739">
    <property type="term" value="C:mitochondrion"/>
    <property type="evidence" value="ECO:0000266"/>
    <property type="project" value="GeneDB"/>
</dbReference>
<dbReference type="GO" id="GO:0004108">
    <property type="term" value="F:citrate (Si)-synthase activity"/>
    <property type="evidence" value="ECO:0000318"/>
    <property type="project" value="GO_Central"/>
</dbReference>
<dbReference type="GO" id="GO:0005975">
    <property type="term" value="P:carbohydrate metabolic process"/>
    <property type="evidence" value="ECO:0000318"/>
    <property type="project" value="GO_Central"/>
</dbReference>
<dbReference type="GO" id="GO:0006101">
    <property type="term" value="P:citrate metabolic process"/>
    <property type="evidence" value="ECO:0007669"/>
    <property type="project" value="InterPro"/>
</dbReference>
<dbReference type="GO" id="GO:0006099">
    <property type="term" value="P:tricarboxylic acid cycle"/>
    <property type="evidence" value="ECO:0000318"/>
    <property type="project" value="GO_Central"/>
</dbReference>
<dbReference type="CDD" id="cd06103">
    <property type="entry name" value="ScCS-like"/>
    <property type="match status" value="1"/>
</dbReference>
<dbReference type="FunFam" id="1.10.230.10:FF:000001">
    <property type="entry name" value="Citrate synthase"/>
    <property type="match status" value="1"/>
</dbReference>
<dbReference type="FunFam" id="1.10.580.10:FF:000001">
    <property type="entry name" value="Citrate synthase"/>
    <property type="match status" value="1"/>
</dbReference>
<dbReference type="Gene3D" id="1.10.580.10">
    <property type="entry name" value="Citrate Synthase, domain 1"/>
    <property type="match status" value="1"/>
</dbReference>
<dbReference type="Gene3D" id="1.10.230.10">
    <property type="entry name" value="Cytochrome P450-Terp, domain 2"/>
    <property type="match status" value="1"/>
</dbReference>
<dbReference type="InterPro" id="IPR016142">
    <property type="entry name" value="Citrate_synth-like_lrg_a-sub"/>
</dbReference>
<dbReference type="InterPro" id="IPR016143">
    <property type="entry name" value="Citrate_synth-like_sm_a-sub"/>
</dbReference>
<dbReference type="InterPro" id="IPR002020">
    <property type="entry name" value="Citrate_synthase"/>
</dbReference>
<dbReference type="InterPro" id="IPR019810">
    <property type="entry name" value="Citrate_synthase_AS"/>
</dbReference>
<dbReference type="InterPro" id="IPR010109">
    <property type="entry name" value="Citrate_synthase_euk"/>
</dbReference>
<dbReference type="InterPro" id="IPR036969">
    <property type="entry name" value="Citrate_synthase_sf"/>
</dbReference>
<dbReference type="NCBIfam" id="TIGR01793">
    <property type="entry name" value="cit_synth_euk"/>
    <property type="match status" value="1"/>
</dbReference>
<dbReference type="NCBIfam" id="NF007128">
    <property type="entry name" value="PRK09569.1"/>
    <property type="match status" value="1"/>
</dbReference>
<dbReference type="PANTHER" id="PTHR11739">
    <property type="entry name" value="CITRATE SYNTHASE"/>
    <property type="match status" value="1"/>
</dbReference>
<dbReference type="PANTHER" id="PTHR11739:SF8">
    <property type="entry name" value="CITRATE SYNTHASE, MITOCHONDRIAL"/>
    <property type="match status" value="1"/>
</dbReference>
<dbReference type="Pfam" id="PF00285">
    <property type="entry name" value="Citrate_synt"/>
    <property type="match status" value="1"/>
</dbReference>
<dbReference type="PRINTS" id="PR00143">
    <property type="entry name" value="CITRTSNTHASE"/>
</dbReference>
<dbReference type="SUPFAM" id="SSF48256">
    <property type="entry name" value="Citrate synthase"/>
    <property type="match status" value="1"/>
</dbReference>
<dbReference type="PROSITE" id="PS00480">
    <property type="entry name" value="CITRATE_SYNTHASE"/>
    <property type="match status" value="1"/>
</dbReference>
<feature type="transit peptide" description="Mitochondrion" evidence="2">
    <location>
        <begin position="1"/>
        <end status="unknown"/>
    </location>
</feature>
<feature type="chain" id="PRO_0000291606" description="Probable citrate synthase, mitochondrial">
    <location>
        <begin status="unknown"/>
        <end position="470"/>
    </location>
</feature>
<feature type="active site" evidence="3">
    <location>
        <position position="297"/>
    </location>
</feature>
<feature type="active site" evidence="3">
    <location>
        <position position="351"/>
    </location>
</feature>
<feature type="active site" evidence="3">
    <location>
        <position position="406"/>
    </location>
</feature>
<accession>Q4QDX3</accession>
<proteinExistence type="inferred from homology"/>
<reference key="1">
    <citation type="journal article" date="2005" name="Science">
        <title>The genome of the kinetoplastid parasite, Leishmania major.</title>
        <authorList>
            <person name="Ivens A.C."/>
            <person name="Peacock C.S."/>
            <person name="Worthey E.A."/>
            <person name="Murphy L."/>
            <person name="Aggarwal G."/>
            <person name="Berriman M."/>
            <person name="Sisk E."/>
            <person name="Rajandream M.A."/>
            <person name="Adlem E."/>
            <person name="Aert R."/>
            <person name="Anupama A."/>
            <person name="Apostolou Z."/>
            <person name="Attipoe P."/>
            <person name="Bason N."/>
            <person name="Bauser C."/>
            <person name="Beck A."/>
            <person name="Beverley S.M."/>
            <person name="Bianchettin G."/>
            <person name="Borzym K."/>
            <person name="Bothe G."/>
            <person name="Bruschi C.V."/>
            <person name="Collins M."/>
            <person name="Cadag E."/>
            <person name="Ciarloni L."/>
            <person name="Clayton C."/>
            <person name="Coulson R.M.R."/>
            <person name="Cronin A."/>
            <person name="Cruz A.K."/>
            <person name="Davies R.M."/>
            <person name="De Gaudenzi J."/>
            <person name="Dobson D.E."/>
            <person name="Duesterhoeft A."/>
            <person name="Fazelina G."/>
            <person name="Fosker N."/>
            <person name="Frasch A.C."/>
            <person name="Fraser A."/>
            <person name="Fuchs M."/>
            <person name="Gabel C."/>
            <person name="Goble A."/>
            <person name="Goffeau A."/>
            <person name="Harris D."/>
            <person name="Hertz-Fowler C."/>
            <person name="Hilbert H."/>
            <person name="Horn D."/>
            <person name="Huang Y."/>
            <person name="Klages S."/>
            <person name="Knights A."/>
            <person name="Kube M."/>
            <person name="Larke N."/>
            <person name="Litvin L."/>
            <person name="Lord A."/>
            <person name="Louie T."/>
            <person name="Marra M."/>
            <person name="Masuy D."/>
            <person name="Matthews K."/>
            <person name="Michaeli S."/>
            <person name="Mottram J.C."/>
            <person name="Mueller-Auer S."/>
            <person name="Munden H."/>
            <person name="Nelson S."/>
            <person name="Norbertczak H."/>
            <person name="Oliver K."/>
            <person name="O'neil S."/>
            <person name="Pentony M."/>
            <person name="Pohl T.M."/>
            <person name="Price C."/>
            <person name="Purnelle B."/>
            <person name="Quail M.A."/>
            <person name="Rabbinowitsch E."/>
            <person name="Reinhardt R."/>
            <person name="Rieger M."/>
            <person name="Rinta J."/>
            <person name="Robben J."/>
            <person name="Robertson L."/>
            <person name="Ruiz J.C."/>
            <person name="Rutter S."/>
            <person name="Saunders D."/>
            <person name="Schaefer M."/>
            <person name="Schein J."/>
            <person name="Schwartz D.C."/>
            <person name="Seeger K."/>
            <person name="Seyler A."/>
            <person name="Sharp S."/>
            <person name="Shin H."/>
            <person name="Sivam D."/>
            <person name="Squares R."/>
            <person name="Squares S."/>
            <person name="Tosato V."/>
            <person name="Vogt C."/>
            <person name="Volckaert G."/>
            <person name="Wambutt R."/>
            <person name="Warren T."/>
            <person name="Wedler H."/>
            <person name="Woodward J."/>
            <person name="Zhou S."/>
            <person name="Zimmermann W."/>
            <person name="Smith D.F."/>
            <person name="Blackwell J.M."/>
            <person name="Stuart K.D."/>
            <person name="Barrell B.G."/>
            <person name="Myler P.J."/>
        </authorList>
    </citation>
    <scope>NUCLEOTIDE SEQUENCE [LARGE SCALE GENOMIC DNA]</scope>
    <source>
        <strain>MHOM/IL/81/Friedlin</strain>
    </source>
</reference>
<protein>
    <recommendedName>
        <fullName>Probable citrate synthase, mitochondrial</fullName>
        <ecNumber>2.3.3.16</ecNumber>
    </recommendedName>
</protein>
<comment type="catalytic activity">
    <reaction evidence="3">
        <text>oxaloacetate + acetyl-CoA + H2O = citrate + CoA + H(+)</text>
        <dbReference type="Rhea" id="RHEA:16845"/>
        <dbReference type="ChEBI" id="CHEBI:15377"/>
        <dbReference type="ChEBI" id="CHEBI:15378"/>
        <dbReference type="ChEBI" id="CHEBI:16452"/>
        <dbReference type="ChEBI" id="CHEBI:16947"/>
        <dbReference type="ChEBI" id="CHEBI:57287"/>
        <dbReference type="ChEBI" id="CHEBI:57288"/>
        <dbReference type="EC" id="2.3.3.16"/>
    </reaction>
</comment>
<comment type="pathway">
    <text>Carbohydrate metabolism; tricarboxylic acid cycle; isocitrate from oxaloacetate: step 1/2.</text>
</comment>
<comment type="subunit">
    <text evidence="1">Homodimer.</text>
</comment>
<comment type="subcellular location">
    <subcellularLocation>
        <location evidence="1">Mitochondrion matrix</location>
    </subcellularLocation>
</comment>
<comment type="miscellaneous">
    <text>Citrate synthase is found in nearly all cells capable of oxidative metabolism.</text>
</comment>
<comment type="similarity">
    <text evidence="4">Belongs to the citrate synthase family.</text>
</comment>
<evidence type="ECO:0000250" key="1"/>
<evidence type="ECO:0000255" key="2"/>
<evidence type="ECO:0000255" key="3">
    <source>
        <dbReference type="PROSITE-ProRule" id="PRU10117"/>
    </source>
</evidence>
<evidence type="ECO:0000305" key="4"/>
<keyword id="KW-0496">Mitochondrion</keyword>
<keyword id="KW-1185">Reference proteome</keyword>
<keyword id="KW-0808">Transferase</keyword>
<keyword id="KW-0809">Transit peptide</keyword>
<keyword id="KW-0816">Tricarboxylic acid cycle</keyword>
<organism>
    <name type="scientific">Leishmania major</name>
    <dbReference type="NCBI Taxonomy" id="5664"/>
    <lineage>
        <taxon>Eukaryota</taxon>
        <taxon>Discoba</taxon>
        <taxon>Euglenozoa</taxon>
        <taxon>Kinetoplastea</taxon>
        <taxon>Metakinetoplastina</taxon>
        <taxon>Trypanosomatida</taxon>
        <taxon>Trypanosomatidae</taxon>
        <taxon>Leishmaniinae</taxon>
        <taxon>Leishmania</taxon>
    </lineage>
</organism>